<sequence>MKKLLKSVLVFAALSSASSLQALPVGNPAEPSLMIDGILWEGFGGDPCDPCTTWVDAISMRMGYYGDFVFDRVLKTDVNKEFQMGAKPTTTTGNAVAPSTLTARENPAYGRHMQDAEMFTNAACMALNIWDRFDVFCTLGASSGYLKGNSASFNLVGLFGNNENQTKVSNGAFVPNMSLDQSVVELYTDTAFAWSVGARAALWECGCATLGASFQYAQSKPKVEELNVLCNAAEFTINKPKGYVGKELPLDLTAGTDAATGTKDASIDYHEWQASLALSYRLNMFTPYIGVKWSRASFDADTIRIAQPKSAETIFDVTTLNPTIAGAGDVKTSAEGQLGDTMQIVSLQLNKMKSRKSCGIAVGTTIVDADKYAVTVETRLIDERAAHVNAQFRF</sequence>
<accession>P23421</accession>
<evidence type="ECO:0000250" key="1"/>
<evidence type="ECO:0000305" key="2"/>
<reference key="1">
    <citation type="journal article" date="1987" name="J. Bacteriol.">
        <title>Diversity of Chlamydia trachomatis major outer membrane protein genes.</title>
        <authorList>
            <person name="Stephens R.S."/>
            <person name="Sanchez-Pescador R."/>
            <person name="Wagar E.A."/>
            <person name="Inouye C."/>
            <person name="Urdea M.S."/>
        </authorList>
    </citation>
    <scope>NUCLEOTIDE SEQUENCE [GENOMIC DNA]</scope>
</reference>
<reference key="2">
    <citation type="submission" date="2000-09" db="EMBL/GenBank/DDBJ databases">
        <title>Sequence analysis of the major outer membrane protein gene (ompA) of Chlamydia trachomatis.</title>
        <authorList>
            <person name="Dean D.A."/>
        </authorList>
    </citation>
    <scope>NUCLEOTIDE SEQUENCE [GENOMIC DNA]</scope>
    <source>
        <strain>B/Tw-5/OT</strain>
    </source>
</reference>
<gene>
    <name type="primary">ompA</name>
    <name type="synonym">omp1B</name>
</gene>
<dbReference type="EMBL" id="M17342">
    <property type="status" value="NOT_ANNOTATED_CDS"/>
    <property type="molecule type" value="Genomic_DNA"/>
</dbReference>
<dbReference type="EMBL" id="AF304856">
    <property type="protein sequence ID" value="AAG41414.1"/>
    <property type="molecule type" value="Genomic_DNA"/>
</dbReference>
<dbReference type="PIR" id="S11010">
    <property type="entry name" value="MMCWTB"/>
</dbReference>
<dbReference type="GO" id="GO:0009279">
    <property type="term" value="C:cell outer membrane"/>
    <property type="evidence" value="ECO:0007669"/>
    <property type="project" value="UniProtKB-SubCell"/>
</dbReference>
<dbReference type="GO" id="GO:0046930">
    <property type="term" value="C:pore complex"/>
    <property type="evidence" value="ECO:0007669"/>
    <property type="project" value="UniProtKB-KW"/>
</dbReference>
<dbReference type="GO" id="GO:0015288">
    <property type="term" value="F:porin activity"/>
    <property type="evidence" value="ECO:0007669"/>
    <property type="project" value="UniProtKB-KW"/>
</dbReference>
<dbReference type="GO" id="GO:0005198">
    <property type="term" value="F:structural molecule activity"/>
    <property type="evidence" value="ECO:0007669"/>
    <property type="project" value="InterPro"/>
</dbReference>
<dbReference type="GO" id="GO:0006811">
    <property type="term" value="P:monoatomic ion transport"/>
    <property type="evidence" value="ECO:0007669"/>
    <property type="project" value="UniProtKB-KW"/>
</dbReference>
<dbReference type="GO" id="GO:0008360">
    <property type="term" value="P:regulation of cell shape"/>
    <property type="evidence" value="ECO:0007669"/>
    <property type="project" value="UniProtKB-KW"/>
</dbReference>
<dbReference type="InterPro" id="IPR000604">
    <property type="entry name" value="Major_OMP_Chlamydia"/>
</dbReference>
<dbReference type="Pfam" id="PF01308">
    <property type="entry name" value="Chlam_OMP"/>
    <property type="match status" value="1"/>
</dbReference>
<dbReference type="PRINTS" id="PR01334">
    <property type="entry name" value="CHLAMIDIAOMP"/>
</dbReference>
<name>MOMPB_CHLTH</name>
<protein>
    <recommendedName>
        <fullName>Major outer membrane porin, serovar B</fullName>
        <shortName>MOMP</shortName>
    </recommendedName>
</protein>
<proteinExistence type="evidence at transcript level"/>
<organism>
    <name type="scientific">Chlamydia trachomatis</name>
    <dbReference type="NCBI Taxonomy" id="813"/>
    <lineage>
        <taxon>Bacteria</taxon>
        <taxon>Pseudomonadati</taxon>
        <taxon>Chlamydiota</taxon>
        <taxon>Chlamydiia</taxon>
        <taxon>Chlamydiales</taxon>
        <taxon>Chlamydiaceae</taxon>
        <taxon>Chlamydia/Chlamydophila group</taxon>
        <taxon>Chlamydia</taxon>
    </lineage>
</organism>
<keyword id="KW-0998">Cell outer membrane</keyword>
<keyword id="KW-0133">Cell shape</keyword>
<keyword id="KW-1015">Disulfide bond</keyword>
<keyword id="KW-0406">Ion transport</keyword>
<keyword id="KW-0472">Membrane</keyword>
<keyword id="KW-0626">Porin</keyword>
<keyword id="KW-0732">Signal</keyword>
<keyword id="KW-0812">Transmembrane</keyword>
<keyword id="KW-1134">Transmembrane beta strand</keyword>
<keyword id="KW-0813">Transport</keyword>
<feature type="signal peptide">
    <location>
        <begin position="1"/>
        <end position="22"/>
    </location>
</feature>
<feature type="chain" id="PRO_0000020145" description="Major outer membrane porin, serovar B">
    <location>
        <begin position="23"/>
        <end position="394"/>
    </location>
</feature>
<comment type="function">
    <text evidence="1">In elementary bodies (EBs, the infectious stage, which is able to survive outside the host cell) provides the structural integrity of the outer envelope through disulfide cross-links with the small cysteine-rich protein and the large cysteine-rich periplasmic protein. It has been described in publications as the Sarkosyl-insoluble COMC (Chlamydia outer membrane complex), and serves as the functional equivalent of peptidoglycan (By similarity).</text>
</comment>
<comment type="function">
    <text evidence="1">Permits diffusion of specific solutes through the outer membrane.</text>
</comment>
<comment type="subunit">
    <text>Part of a disulfide cross-linked outer membrane complex (COMC) composed of the major outer membrane porin (MOMP), the small cysteine-rich protein (OmcA) and the large cysteine-rich periplasmic protein (OmcB).</text>
</comment>
<comment type="subcellular location">
    <subcellularLocation>
        <location evidence="1">Cell outer membrane</location>
        <topology evidence="1">Multi-pass membrane protein</topology>
    </subcellularLocation>
</comment>
<comment type="developmental stage">
    <text>It is present but some of the disulfide bonds are reduced in reticulate bodies (RBs).</text>
</comment>
<comment type="similarity">
    <text evidence="2">Belongs to the chlamydial porin (CP) (TC 1.B.2) family.</text>
</comment>